<feature type="chain" id="PRO_0000170441" description="Nucleoid-associated protein SE_2306">
    <location>
        <begin position="1"/>
        <end position="105"/>
    </location>
</feature>
<feature type="region of interest" description="Disordered" evidence="2">
    <location>
        <begin position="1"/>
        <end position="40"/>
    </location>
</feature>
<feature type="compositionally biased region" description="Low complexity" evidence="2">
    <location>
        <begin position="7"/>
        <end position="16"/>
    </location>
</feature>
<feature type="compositionally biased region" description="Basic and acidic residues" evidence="2">
    <location>
        <begin position="21"/>
        <end position="33"/>
    </location>
</feature>
<name>Y2306_STAES</name>
<proteinExistence type="inferred from homology"/>
<protein>
    <recommendedName>
        <fullName evidence="1">Nucleoid-associated protein SE_2306</fullName>
    </recommendedName>
</protein>
<evidence type="ECO:0000255" key="1">
    <source>
        <dbReference type="HAMAP-Rule" id="MF_00274"/>
    </source>
</evidence>
<evidence type="ECO:0000256" key="2">
    <source>
        <dbReference type="SAM" id="MobiDB-lite"/>
    </source>
</evidence>
<accession>Q8CQT5</accession>
<comment type="function">
    <text evidence="1">Binds to DNA and alters its conformation. May be involved in regulation of gene expression, nucleoid organization and DNA protection.</text>
</comment>
<comment type="subunit">
    <text evidence="1">Homodimer.</text>
</comment>
<comment type="subcellular location">
    <subcellularLocation>
        <location evidence="1">Cytoplasm</location>
        <location evidence="1">Nucleoid</location>
    </subcellularLocation>
</comment>
<comment type="similarity">
    <text evidence="1">Belongs to the YbaB/EbfC family.</text>
</comment>
<dbReference type="EMBL" id="AE015929">
    <property type="protein sequence ID" value="AAO05948.1"/>
    <property type="molecule type" value="Genomic_DNA"/>
</dbReference>
<dbReference type="RefSeq" id="NP_765861.1">
    <property type="nucleotide sequence ID" value="NC_004461.1"/>
</dbReference>
<dbReference type="RefSeq" id="WP_001829343.1">
    <property type="nucleotide sequence ID" value="NZ_WBME01000004.1"/>
</dbReference>
<dbReference type="SMR" id="Q8CQT5"/>
<dbReference type="KEGG" id="sep:SE_2306"/>
<dbReference type="PATRIC" id="fig|176280.10.peg.2248"/>
<dbReference type="eggNOG" id="COG0718">
    <property type="taxonomic scope" value="Bacteria"/>
</dbReference>
<dbReference type="HOGENOM" id="CLU_140930_1_0_9"/>
<dbReference type="OrthoDB" id="9795263at2"/>
<dbReference type="Proteomes" id="UP000001411">
    <property type="component" value="Chromosome"/>
</dbReference>
<dbReference type="GO" id="GO:0043590">
    <property type="term" value="C:bacterial nucleoid"/>
    <property type="evidence" value="ECO:0007669"/>
    <property type="project" value="UniProtKB-UniRule"/>
</dbReference>
<dbReference type="GO" id="GO:0005829">
    <property type="term" value="C:cytosol"/>
    <property type="evidence" value="ECO:0007669"/>
    <property type="project" value="TreeGrafter"/>
</dbReference>
<dbReference type="GO" id="GO:0003677">
    <property type="term" value="F:DNA binding"/>
    <property type="evidence" value="ECO:0007669"/>
    <property type="project" value="UniProtKB-UniRule"/>
</dbReference>
<dbReference type="FunFam" id="3.30.1310.10:FF:000002">
    <property type="entry name" value="Nucleoid-associated protein IKC_06587"/>
    <property type="match status" value="1"/>
</dbReference>
<dbReference type="Gene3D" id="3.30.1310.10">
    <property type="entry name" value="Nucleoid-associated protein YbaB-like domain"/>
    <property type="match status" value="1"/>
</dbReference>
<dbReference type="HAMAP" id="MF_00274">
    <property type="entry name" value="DNA_YbaB_EbfC"/>
    <property type="match status" value="1"/>
</dbReference>
<dbReference type="InterPro" id="IPR036894">
    <property type="entry name" value="YbaB-like_sf"/>
</dbReference>
<dbReference type="InterPro" id="IPR004401">
    <property type="entry name" value="YbaB/EbfC"/>
</dbReference>
<dbReference type="NCBIfam" id="TIGR00103">
    <property type="entry name" value="DNA_YbaB_EbfC"/>
    <property type="match status" value="1"/>
</dbReference>
<dbReference type="PANTHER" id="PTHR33449">
    <property type="entry name" value="NUCLEOID-ASSOCIATED PROTEIN YBAB"/>
    <property type="match status" value="1"/>
</dbReference>
<dbReference type="PANTHER" id="PTHR33449:SF1">
    <property type="entry name" value="NUCLEOID-ASSOCIATED PROTEIN YBAB"/>
    <property type="match status" value="1"/>
</dbReference>
<dbReference type="Pfam" id="PF02575">
    <property type="entry name" value="YbaB_DNA_bd"/>
    <property type="match status" value="1"/>
</dbReference>
<dbReference type="PIRSF" id="PIRSF004555">
    <property type="entry name" value="UCP004555"/>
    <property type="match status" value="1"/>
</dbReference>
<dbReference type="SUPFAM" id="SSF82607">
    <property type="entry name" value="YbaB-like"/>
    <property type="match status" value="1"/>
</dbReference>
<reference key="1">
    <citation type="journal article" date="2003" name="Mol. Microbiol.">
        <title>Genome-based analysis of virulence genes in a non-biofilm-forming Staphylococcus epidermidis strain (ATCC 12228).</title>
        <authorList>
            <person name="Zhang Y.-Q."/>
            <person name="Ren S.-X."/>
            <person name="Li H.-L."/>
            <person name="Wang Y.-X."/>
            <person name="Fu G."/>
            <person name="Yang J."/>
            <person name="Qin Z.-Q."/>
            <person name="Miao Y.-G."/>
            <person name="Wang W.-Y."/>
            <person name="Chen R.-S."/>
            <person name="Shen Y."/>
            <person name="Chen Z."/>
            <person name="Yuan Z.-H."/>
            <person name="Zhao G.-P."/>
            <person name="Qu D."/>
            <person name="Danchin A."/>
            <person name="Wen Y.-M."/>
        </authorList>
    </citation>
    <scope>NUCLEOTIDE SEQUENCE [LARGE SCALE GENOMIC DNA]</scope>
    <source>
        <strain>ATCC 12228 / FDA PCI 1200</strain>
    </source>
</reference>
<organism>
    <name type="scientific">Staphylococcus epidermidis (strain ATCC 12228 / FDA PCI 1200)</name>
    <dbReference type="NCBI Taxonomy" id="176280"/>
    <lineage>
        <taxon>Bacteria</taxon>
        <taxon>Bacillati</taxon>
        <taxon>Bacillota</taxon>
        <taxon>Bacilli</taxon>
        <taxon>Bacillales</taxon>
        <taxon>Staphylococcaceae</taxon>
        <taxon>Staphylococcus</taxon>
    </lineage>
</organism>
<sequence>MRGGGNMQQMMKQMQKMQKKMAQEQEKLKEERVAGTAGGGMVTVTVTGHKEVVDVEIKEEAVDPEDIEMLQDLVLAATNEAMNKADELTQQRLGKHTQGLNIPGM</sequence>
<gene>
    <name type="ordered locus">SE_2306</name>
</gene>
<keyword id="KW-0963">Cytoplasm</keyword>
<keyword id="KW-0238">DNA-binding</keyword>